<protein>
    <recommendedName>
        <fullName>Fatty acid desaturase 6</fullName>
        <ecNumber>1.14.19.-</ecNumber>
    </recommendedName>
</protein>
<dbReference type="EC" id="1.14.19.-"/>
<dbReference type="EMBL" id="AY203929">
    <property type="protein sequence ID" value="AAP34452.1"/>
    <property type="molecule type" value="mRNA"/>
</dbReference>
<dbReference type="EMBL" id="AK094411">
    <property type="protein sequence ID" value="BAC04349.1"/>
    <property type="status" value="ALT_SEQ"/>
    <property type="molecule type" value="mRNA"/>
</dbReference>
<dbReference type="EMBL" id="BC117230">
    <property type="protein sequence ID" value="AAI17231.2"/>
    <property type="molecule type" value="mRNA"/>
</dbReference>
<dbReference type="RefSeq" id="NP_835229.3">
    <property type="nucleotide sequence ID" value="NM_178128.5"/>
</dbReference>
<dbReference type="BioGRID" id="129719">
    <property type="interactions" value="20"/>
</dbReference>
<dbReference type="FunCoup" id="Q8N9I5">
    <property type="interactions" value="13"/>
</dbReference>
<dbReference type="IntAct" id="Q8N9I5">
    <property type="interactions" value="21"/>
</dbReference>
<dbReference type="STRING" id="9606.ENSP00000481684"/>
<dbReference type="iPTMnet" id="Q8N9I5"/>
<dbReference type="PhosphoSitePlus" id="Q8N9I5"/>
<dbReference type="BioMuta" id="FADS6"/>
<dbReference type="DMDM" id="190359479"/>
<dbReference type="jPOST" id="Q8N9I5"/>
<dbReference type="MassIVE" id="Q8N9I5"/>
<dbReference type="PaxDb" id="9606-ENSP00000481684"/>
<dbReference type="DNASU" id="283985"/>
<dbReference type="GeneID" id="283985"/>
<dbReference type="KEGG" id="hsa:283985"/>
<dbReference type="AGR" id="HGNC:30459"/>
<dbReference type="CTD" id="283985"/>
<dbReference type="GeneCards" id="FADS6"/>
<dbReference type="HGNC" id="HGNC:30459">
    <property type="gene designation" value="FADS6"/>
</dbReference>
<dbReference type="MIM" id="620577">
    <property type="type" value="gene"/>
</dbReference>
<dbReference type="neXtProt" id="NX_Q8N9I5"/>
<dbReference type="PharmGKB" id="PA134883572"/>
<dbReference type="eggNOG" id="ENOG502QQ1J">
    <property type="taxonomic scope" value="Eukaryota"/>
</dbReference>
<dbReference type="InParanoid" id="Q8N9I5"/>
<dbReference type="OrthoDB" id="8734935at2759"/>
<dbReference type="PAN-GO" id="Q8N9I5">
    <property type="GO annotations" value="2 GO annotations based on evolutionary models"/>
</dbReference>
<dbReference type="PhylomeDB" id="Q8N9I5"/>
<dbReference type="TreeFam" id="TF333083"/>
<dbReference type="PathwayCommons" id="Q8N9I5"/>
<dbReference type="SignaLink" id="Q8N9I5"/>
<dbReference type="SIGNOR" id="Q8N9I5"/>
<dbReference type="UniPathway" id="UPA00199"/>
<dbReference type="BioGRID-ORCS" id="283985">
    <property type="hits" value="14 hits in 1141 CRISPR screens"/>
</dbReference>
<dbReference type="GenomeRNAi" id="283985"/>
<dbReference type="Pharos" id="Q8N9I5">
    <property type="development level" value="Tdark"/>
</dbReference>
<dbReference type="PRO" id="PR:Q8N9I5"/>
<dbReference type="Proteomes" id="UP000005640">
    <property type="component" value="Unplaced"/>
</dbReference>
<dbReference type="RNAct" id="Q8N9I5">
    <property type="molecule type" value="protein"/>
</dbReference>
<dbReference type="GO" id="GO:0016020">
    <property type="term" value="C:membrane"/>
    <property type="evidence" value="ECO:0007669"/>
    <property type="project" value="UniProtKB-SubCell"/>
</dbReference>
<dbReference type="GO" id="GO:0016717">
    <property type="term" value="F:oxidoreductase activity, acting on paired donors, with oxidation of a pair of donors resulting in the reduction of molecular oxygen to two molecules of water"/>
    <property type="evidence" value="ECO:0000318"/>
    <property type="project" value="GO_Central"/>
</dbReference>
<dbReference type="GO" id="GO:0006633">
    <property type="term" value="P:fatty acid biosynthetic process"/>
    <property type="evidence" value="ECO:0007669"/>
    <property type="project" value="UniProtKB-KW"/>
</dbReference>
<dbReference type="GO" id="GO:0006629">
    <property type="term" value="P:lipid metabolic process"/>
    <property type="evidence" value="ECO:0000318"/>
    <property type="project" value="GO_Central"/>
</dbReference>
<dbReference type="InterPro" id="IPR005804">
    <property type="entry name" value="FA_desaturase_dom"/>
</dbReference>
<dbReference type="InterPro" id="IPR012171">
    <property type="entry name" value="Fatty_acid_desaturase"/>
</dbReference>
<dbReference type="PANTHER" id="PTHR19353">
    <property type="entry name" value="FATTY ACID DESATURASE 2"/>
    <property type="match status" value="1"/>
</dbReference>
<dbReference type="PANTHER" id="PTHR19353:SF13">
    <property type="entry name" value="FATTY ACID DESATURASE 6"/>
    <property type="match status" value="1"/>
</dbReference>
<dbReference type="Pfam" id="PF00487">
    <property type="entry name" value="FA_desaturase"/>
    <property type="match status" value="1"/>
</dbReference>
<comment type="pathway">
    <text>Lipid metabolism; fatty acid metabolism.</text>
</comment>
<comment type="interaction">
    <interactant intactId="EBI-3943864">
        <id>Q8N9I5</id>
    </interactant>
    <interactant intactId="EBI-638194">
        <id>P53365</id>
        <label>ARFIP2</label>
    </interactant>
    <organismsDiffer>false</organismsDiffer>
    <experiments>3</experiments>
</comment>
<comment type="interaction">
    <interactant intactId="EBI-3943864">
        <id>Q8N9I5</id>
    </interactant>
    <interactant intactId="EBI-3867333">
        <id>A8MQ03</id>
        <label>CYSRT1</label>
    </interactant>
    <organismsDiffer>false</organismsDiffer>
    <experiments>3</experiments>
</comment>
<comment type="interaction">
    <interactant intactId="EBI-3943864">
        <id>Q8N9I5</id>
    </interactant>
    <interactant intactId="EBI-517508">
        <id>Q9NR28</id>
        <label>DIABLO</label>
    </interactant>
    <organismsDiffer>false</organismsDiffer>
    <experiments>3</experiments>
</comment>
<comment type="interaction">
    <interactant intactId="EBI-3943864">
        <id>Q8N9I5</id>
    </interactant>
    <interactant intactId="EBI-741101">
        <id>Q13643</id>
        <label>FHL3</label>
    </interactant>
    <organismsDiffer>false</organismsDiffer>
    <experiments>3</experiments>
</comment>
<comment type="interaction">
    <interactant intactId="EBI-3943864">
        <id>Q8N9I5</id>
    </interactant>
    <interactant intactId="EBI-9304251">
        <id>Q05329</id>
        <label>GAD2</label>
    </interactant>
    <organismsDiffer>false</organismsDiffer>
    <experiments>3</experiments>
</comment>
<comment type="interaction">
    <interactant intactId="EBI-3943864">
        <id>Q8N9I5</id>
    </interactant>
    <interactant intactId="EBI-749162">
        <id>Q9BT40</id>
        <label>INPP5K</label>
    </interactant>
    <organismsDiffer>false</organismsDiffer>
    <experiments>3</experiments>
</comment>
<comment type="interaction">
    <interactant intactId="EBI-3943864">
        <id>Q8N9I5</id>
    </interactant>
    <interactant intactId="EBI-11741292">
        <id>Q9BYS1</id>
        <label>KRTAP1-5</label>
    </interactant>
    <organismsDiffer>false</organismsDiffer>
    <experiments>3</experiments>
</comment>
<comment type="interaction">
    <interactant intactId="EBI-3943864">
        <id>Q8N9I5</id>
    </interactant>
    <interactant intactId="EBI-10172290">
        <id>P60409</id>
        <label>KRTAP10-7</label>
    </interactant>
    <organismsDiffer>false</organismsDiffer>
    <experiments>3</experiments>
</comment>
<comment type="interaction">
    <interactant intactId="EBI-3943864">
        <id>Q8N9I5</id>
    </interactant>
    <interactant intactId="EBI-10171774">
        <id>P60410</id>
        <label>KRTAP10-8</label>
    </interactant>
    <organismsDiffer>false</organismsDiffer>
    <experiments>3</experiments>
</comment>
<comment type="interaction">
    <interactant intactId="EBI-3943864">
        <id>Q8N9I5</id>
    </interactant>
    <interactant intactId="EBI-3957694">
        <id>Q9BYR6</id>
        <label>KRTAP3-3</label>
    </interactant>
    <organismsDiffer>false</organismsDiffer>
    <experiments>3</experiments>
</comment>
<comment type="interaction">
    <interactant intactId="EBI-3943864">
        <id>Q8N9I5</id>
    </interactant>
    <interactant intactId="EBI-22311199">
        <id>Q3LI67</id>
        <label>KRTAP6-3</label>
    </interactant>
    <organismsDiffer>false</organismsDiffer>
    <experiments>3</experiments>
</comment>
<comment type="interaction">
    <interactant intactId="EBI-3943864">
        <id>Q8N9I5</id>
    </interactant>
    <interactant intactId="EBI-724076">
        <id>Q99750</id>
        <label>MDFI</label>
    </interactant>
    <organismsDiffer>false</organismsDiffer>
    <experiments>3</experiments>
</comment>
<comment type="interaction">
    <interactant intactId="EBI-3943864">
        <id>Q8N9I5</id>
    </interactant>
    <interactant intactId="EBI-7825321">
        <id>Q96E29</id>
        <label>MTERF3</label>
    </interactant>
    <organismsDiffer>false</organismsDiffer>
    <experiments>3</experiments>
</comment>
<comment type="interaction">
    <interactant intactId="EBI-3943864">
        <id>Q8N9I5</id>
    </interactant>
    <interactant intactId="EBI-741171">
        <id>Q96AL5</id>
        <label>PBX3</label>
    </interactant>
    <organismsDiffer>false</organismsDiffer>
    <experiments>3</experiments>
</comment>
<comment type="interaction">
    <interactant intactId="EBI-3943864">
        <id>Q8N9I5</id>
    </interactant>
    <interactant intactId="EBI-1045072">
        <id>Q96T60</id>
        <label>PNKP</label>
    </interactant>
    <organismsDiffer>false</organismsDiffer>
    <experiments>3</experiments>
</comment>
<comment type="interaction">
    <interactant intactId="EBI-3943864">
        <id>Q8N9I5</id>
    </interactant>
    <interactant intactId="EBI-8638294">
        <id>Q9NUH8</id>
        <label>TMEM14B</label>
    </interactant>
    <organismsDiffer>false</organismsDiffer>
    <experiments>3</experiments>
</comment>
<comment type="interaction">
    <interactant intactId="EBI-3943864">
        <id>Q8N9I5</id>
    </interactant>
    <interactant intactId="EBI-949753">
        <id>Q63HR2</id>
        <label>TNS2</label>
    </interactant>
    <organismsDiffer>false</organismsDiffer>
    <experiments>3</experiments>
</comment>
<comment type="interaction">
    <interactant intactId="EBI-3943864">
        <id>Q8N9I5</id>
    </interactant>
    <interactant intactId="EBI-742790">
        <id>Q13049</id>
        <label>TRIM32</label>
    </interactant>
    <organismsDiffer>false</organismsDiffer>
    <experiments>3</experiments>
</comment>
<comment type="interaction">
    <interactant intactId="EBI-3943864">
        <id>Q8N9I5</id>
    </interactant>
    <interactant intactId="EBI-10210710">
        <id>P49638</id>
        <label>TTPA</label>
    </interactant>
    <organismsDiffer>false</organismsDiffer>
    <experiments>3</experiments>
</comment>
<comment type="interaction">
    <interactant intactId="EBI-3943864">
        <id>Q8N9I5</id>
    </interactant>
    <interactant intactId="EBI-7353612">
        <id>P57075-2</id>
        <label>UBASH3A</label>
    </interactant>
    <organismsDiffer>false</organismsDiffer>
    <experiments>3</experiments>
</comment>
<comment type="subcellular location">
    <subcellularLocation>
        <location evidence="4">Membrane</location>
        <topology evidence="4">Multi-pass membrane protein</topology>
    </subcellularLocation>
</comment>
<comment type="alternative products">
    <event type="alternative splicing"/>
    <isoform>
        <id>Q8N9I5-1</id>
        <name>1</name>
        <sequence type="displayed"/>
    </isoform>
    <isoform>
        <id>Q8N9I5-2</id>
        <name>2</name>
        <sequence type="described" ref="VSP_034320"/>
    </isoform>
</comment>
<comment type="similarity">
    <text evidence="4">Belongs to the fatty acid desaturase type 1 family.</text>
</comment>
<comment type="sequence caution" evidence="4">
    <conflict type="miscellaneous discrepancy">
        <sequence resource="EMBL-CDS" id="BAC04349"/>
    </conflict>
    <text>The N-terminus contains a duplication of the repeated 'MEPTEP' sequence. It is unclear whether such duplication is due to a sequencing error or a polymorphism.</text>
</comment>
<organism>
    <name type="scientific">Homo sapiens</name>
    <name type="common">Human</name>
    <dbReference type="NCBI Taxonomy" id="9606"/>
    <lineage>
        <taxon>Eukaryota</taxon>
        <taxon>Metazoa</taxon>
        <taxon>Chordata</taxon>
        <taxon>Craniata</taxon>
        <taxon>Vertebrata</taxon>
        <taxon>Euteleostomi</taxon>
        <taxon>Mammalia</taxon>
        <taxon>Eutheria</taxon>
        <taxon>Euarchontoglires</taxon>
        <taxon>Primates</taxon>
        <taxon>Haplorrhini</taxon>
        <taxon>Catarrhini</taxon>
        <taxon>Hominidae</taxon>
        <taxon>Homo</taxon>
    </lineage>
</organism>
<feature type="chain" id="PRO_0000341546" description="Fatty acid desaturase 6">
    <location>
        <begin position="1"/>
        <end position="356"/>
    </location>
</feature>
<feature type="transmembrane region" description="Helical" evidence="1">
    <location>
        <begin position="54"/>
        <end position="74"/>
    </location>
</feature>
<feature type="transmembrane region" description="Helical" evidence="1">
    <location>
        <begin position="78"/>
        <end position="98"/>
    </location>
</feature>
<feature type="transmembrane region" description="Helical" evidence="1">
    <location>
        <begin position="118"/>
        <end position="138"/>
    </location>
</feature>
<feature type="transmembrane region" description="Helical" evidence="1">
    <location>
        <begin position="166"/>
        <end position="186"/>
    </location>
</feature>
<feature type="transmembrane region" description="Helical" evidence="1">
    <location>
        <begin position="200"/>
        <end position="220"/>
    </location>
</feature>
<feature type="transmembrane region" description="Helical" evidence="1">
    <location>
        <begin position="269"/>
        <end position="289"/>
    </location>
</feature>
<feature type="repeat" description="1">
    <location>
        <begin position="1"/>
        <end position="6"/>
    </location>
</feature>
<feature type="repeat" description="2">
    <location>
        <begin position="7"/>
        <end position="12"/>
    </location>
</feature>
<feature type="repeat" description="3">
    <location>
        <begin position="13"/>
        <end position="18"/>
    </location>
</feature>
<feature type="region of interest" description="Disordered" evidence="2">
    <location>
        <begin position="1"/>
        <end position="25"/>
    </location>
</feature>
<feature type="region of interest" description="3 X 6 AA tandem repeat of M-E-P-T-E-P">
    <location>
        <begin position="1"/>
        <end position="18"/>
    </location>
</feature>
<feature type="short sequence motif" description="Histidine box-1">
    <location>
        <begin position="102"/>
        <end position="106"/>
    </location>
</feature>
<feature type="short sequence motif" description="Histidine box-2">
    <location>
        <begin position="139"/>
        <end position="143"/>
    </location>
</feature>
<feature type="short sequence motif" description="Histidine box-3">
    <location>
        <begin position="292"/>
        <end position="296"/>
    </location>
</feature>
<feature type="splice variant" id="VSP_034320" description="In isoform 2." evidence="3">
    <location>
        <begin position="1"/>
        <end position="18"/>
    </location>
</feature>
<feature type="sequence conflict" description="In Ref. 2; BAC04349." evidence="4" ref="2">
    <original>K</original>
    <variation>E</variation>
    <location>
        <position position="310"/>
    </location>
</feature>
<gene>
    <name type="primary">FADS6</name>
    <name type="ORF">FP18279</name>
</gene>
<sequence length="356" mass="40447">MEPTEPMEPTEPMEPTEPMEPARSAHRGGEALLRELEVLVQDVVRTSSWWERHGVDCAILALSLFALPAGFLCLRWENALVFASGITILGVCHYTLTVKGSHLATHGALTESKRWSKIWLLFFVEVCTAFTAEHATHGHVKMHHAYTNVVGLGDSSTWRLPCLNRYVYMFLAPFLLPIATPLVAVERLRKVELGTALRTLALISLGLYSHYWLLLNVSGFKNPSSALGCMFLTRSLLAHPYLHVNIFQHIGLPMFSRDNKPRRIHMMSLGVLNLARLPVLDWAFGHSIISCHVEHHLFPRLSDNMCLKVKPVVSQFLREKQLPYNEDSYLARFQLFLRRYEEFMVQAPPITELVGL</sequence>
<proteinExistence type="evidence at protein level"/>
<accession>Q8N9I5</accession>
<accession>Q17RQ7</accession>
<accession>Q6XYE1</accession>
<reference key="1">
    <citation type="journal article" date="2004" name="Proc. Natl. Acad. Sci. U.S.A.">
        <title>Large-scale cDNA transfection screening for genes related to cancer development and progression.</title>
        <authorList>
            <person name="Wan D."/>
            <person name="Gong Y."/>
            <person name="Qin W."/>
            <person name="Zhang P."/>
            <person name="Li J."/>
            <person name="Wei L."/>
            <person name="Zhou X."/>
            <person name="Li H."/>
            <person name="Qiu X."/>
            <person name="Zhong F."/>
            <person name="He L."/>
            <person name="Yu J."/>
            <person name="Yao G."/>
            <person name="Jiang H."/>
            <person name="Qian L."/>
            <person name="Yu Y."/>
            <person name="Shu H."/>
            <person name="Chen X."/>
            <person name="Xu H."/>
            <person name="Guo M."/>
            <person name="Pan Z."/>
            <person name="Chen Y."/>
            <person name="Ge C."/>
            <person name="Yang S."/>
            <person name="Gu J."/>
        </authorList>
    </citation>
    <scope>NUCLEOTIDE SEQUENCE [LARGE SCALE MRNA] (ISOFORM 2)</scope>
</reference>
<reference key="2">
    <citation type="journal article" date="2004" name="Nat. Genet.">
        <title>Complete sequencing and characterization of 21,243 full-length human cDNAs.</title>
        <authorList>
            <person name="Ota T."/>
            <person name="Suzuki Y."/>
            <person name="Nishikawa T."/>
            <person name="Otsuki T."/>
            <person name="Sugiyama T."/>
            <person name="Irie R."/>
            <person name="Wakamatsu A."/>
            <person name="Hayashi K."/>
            <person name="Sato H."/>
            <person name="Nagai K."/>
            <person name="Kimura K."/>
            <person name="Makita H."/>
            <person name="Sekine M."/>
            <person name="Obayashi M."/>
            <person name="Nishi T."/>
            <person name="Shibahara T."/>
            <person name="Tanaka T."/>
            <person name="Ishii S."/>
            <person name="Yamamoto J."/>
            <person name="Saito K."/>
            <person name="Kawai Y."/>
            <person name="Isono Y."/>
            <person name="Nakamura Y."/>
            <person name="Nagahari K."/>
            <person name="Murakami K."/>
            <person name="Yasuda T."/>
            <person name="Iwayanagi T."/>
            <person name="Wagatsuma M."/>
            <person name="Shiratori A."/>
            <person name="Sudo H."/>
            <person name="Hosoiri T."/>
            <person name="Kaku Y."/>
            <person name="Kodaira H."/>
            <person name="Kondo H."/>
            <person name="Sugawara M."/>
            <person name="Takahashi M."/>
            <person name="Kanda K."/>
            <person name="Yokoi T."/>
            <person name="Furuya T."/>
            <person name="Kikkawa E."/>
            <person name="Omura Y."/>
            <person name="Abe K."/>
            <person name="Kamihara K."/>
            <person name="Katsuta N."/>
            <person name="Sato K."/>
            <person name="Tanikawa M."/>
            <person name="Yamazaki M."/>
            <person name="Ninomiya K."/>
            <person name="Ishibashi T."/>
            <person name="Yamashita H."/>
            <person name="Murakawa K."/>
            <person name="Fujimori K."/>
            <person name="Tanai H."/>
            <person name="Kimata M."/>
            <person name="Watanabe M."/>
            <person name="Hiraoka S."/>
            <person name="Chiba Y."/>
            <person name="Ishida S."/>
            <person name="Ono Y."/>
            <person name="Takiguchi S."/>
            <person name="Watanabe S."/>
            <person name="Yosida M."/>
            <person name="Hotuta T."/>
            <person name="Kusano J."/>
            <person name="Kanehori K."/>
            <person name="Takahashi-Fujii A."/>
            <person name="Hara H."/>
            <person name="Tanase T.-O."/>
            <person name="Nomura Y."/>
            <person name="Togiya S."/>
            <person name="Komai F."/>
            <person name="Hara R."/>
            <person name="Takeuchi K."/>
            <person name="Arita M."/>
            <person name="Imose N."/>
            <person name="Musashino K."/>
            <person name="Yuuki H."/>
            <person name="Oshima A."/>
            <person name="Sasaki N."/>
            <person name="Aotsuka S."/>
            <person name="Yoshikawa Y."/>
            <person name="Matsunawa H."/>
            <person name="Ichihara T."/>
            <person name="Shiohata N."/>
            <person name="Sano S."/>
            <person name="Moriya S."/>
            <person name="Momiyama H."/>
            <person name="Satoh N."/>
            <person name="Takami S."/>
            <person name="Terashima Y."/>
            <person name="Suzuki O."/>
            <person name="Nakagawa S."/>
            <person name="Senoh A."/>
            <person name="Mizoguchi H."/>
            <person name="Goto Y."/>
            <person name="Shimizu F."/>
            <person name="Wakebe H."/>
            <person name="Hishigaki H."/>
            <person name="Watanabe T."/>
            <person name="Sugiyama A."/>
            <person name="Takemoto M."/>
            <person name="Kawakami B."/>
            <person name="Yamazaki M."/>
            <person name="Watanabe K."/>
            <person name="Kumagai A."/>
            <person name="Itakura S."/>
            <person name="Fukuzumi Y."/>
            <person name="Fujimori Y."/>
            <person name="Komiyama M."/>
            <person name="Tashiro H."/>
            <person name="Tanigami A."/>
            <person name="Fujiwara T."/>
            <person name="Ono T."/>
            <person name="Yamada K."/>
            <person name="Fujii Y."/>
            <person name="Ozaki K."/>
            <person name="Hirao M."/>
            <person name="Ohmori Y."/>
            <person name="Kawabata A."/>
            <person name="Hikiji T."/>
            <person name="Kobatake N."/>
            <person name="Inagaki H."/>
            <person name="Ikema Y."/>
            <person name="Okamoto S."/>
            <person name="Okitani R."/>
            <person name="Kawakami T."/>
            <person name="Noguchi S."/>
            <person name="Itoh T."/>
            <person name="Shigeta K."/>
            <person name="Senba T."/>
            <person name="Matsumura K."/>
            <person name="Nakajima Y."/>
            <person name="Mizuno T."/>
            <person name="Morinaga M."/>
            <person name="Sasaki M."/>
            <person name="Togashi T."/>
            <person name="Oyama M."/>
            <person name="Hata H."/>
            <person name="Watanabe M."/>
            <person name="Komatsu T."/>
            <person name="Mizushima-Sugano J."/>
            <person name="Satoh T."/>
            <person name="Shirai Y."/>
            <person name="Takahashi Y."/>
            <person name="Nakagawa K."/>
            <person name="Okumura K."/>
            <person name="Nagase T."/>
            <person name="Nomura N."/>
            <person name="Kikuchi H."/>
            <person name="Masuho Y."/>
            <person name="Yamashita R."/>
            <person name="Nakai K."/>
            <person name="Yada T."/>
            <person name="Nakamura Y."/>
            <person name="Ohara O."/>
            <person name="Isogai T."/>
            <person name="Sugano S."/>
        </authorList>
    </citation>
    <scope>NUCLEOTIDE SEQUENCE [LARGE SCALE MRNA] (ISOFORM 1)</scope>
    <source>
        <tissue>Cerebellum</tissue>
    </source>
</reference>
<reference key="3">
    <citation type="journal article" date="2004" name="Genome Res.">
        <title>The status, quality, and expansion of the NIH full-length cDNA project: the Mammalian Gene Collection (MGC).</title>
        <authorList>
            <consortium name="The MGC Project Team"/>
        </authorList>
    </citation>
    <scope>NUCLEOTIDE SEQUENCE [LARGE SCALE MRNA] (ISOFORM 1)</scope>
</reference>
<name>FADS6_HUMAN</name>
<keyword id="KW-0025">Alternative splicing</keyword>
<keyword id="KW-0275">Fatty acid biosynthesis</keyword>
<keyword id="KW-0276">Fatty acid metabolism</keyword>
<keyword id="KW-0444">Lipid biosynthesis</keyword>
<keyword id="KW-0443">Lipid metabolism</keyword>
<keyword id="KW-0472">Membrane</keyword>
<keyword id="KW-0560">Oxidoreductase</keyword>
<keyword id="KW-1267">Proteomics identification</keyword>
<keyword id="KW-1185">Reference proteome</keyword>
<keyword id="KW-0677">Repeat</keyword>
<keyword id="KW-0812">Transmembrane</keyword>
<keyword id="KW-1133">Transmembrane helix</keyword>
<evidence type="ECO:0000255" key="1"/>
<evidence type="ECO:0000256" key="2">
    <source>
        <dbReference type="SAM" id="MobiDB-lite"/>
    </source>
</evidence>
<evidence type="ECO:0000303" key="3">
    <source>
    </source>
</evidence>
<evidence type="ECO:0000305" key="4"/>